<accession>B3ECB9</accession>
<name>PHS_CHLL2</name>
<sequence>MNELKHMACVPCAEAGSPLAADEIDRLRQELPDWEVVTEEGMVRLRRTFTFPDFGQALAFTNRVGELAEAEGHHPRLVTEWGRVTVEWWTHSAGGLHRNDFIMAARTGGLHEG</sequence>
<organism>
    <name type="scientific">Chlorobium limicola (strain DSM 245 / NBRC 103803 / 6330)</name>
    <dbReference type="NCBI Taxonomy" id="290315"/>
    <lineage>
        <taxon>Bacteria</taxon>
        <taxon>Pseudomonadati</taxon>
        <taxon>Chlorobiota</taxon>
        <taxon>Chlorobiia</taxon>
        <taxon>Chlorobiales</taxon>
        <taxon>Chlorobiaceae</taxon>
        <taxon>Chlorobium/Pelodictyon group</taxon>
        <taxon>Chlorobium</taxon>
    </lineage>
</organism>
<reference key="1">
    <citation type="submission" date="2008-05" db="EMBL/GenBank/DDBJ databases">
        <title>Complete sequence of Chlorobium limicola DSM 245.</title>
        <authorList>
            <consortium name="US DOE Joint Genome Institute"/>
            <person name="Lucas S."/>
            <person name="Copeland A."/>
            <person name="Lapidus A."/>
            <person name="Glavina del Rio T."/>
            <person name="Dalin E."/>
            <person name="Tice H."/>
            <person name="Bruce D."/>
            <person name="Goodwin L."/>
            <person name="Pitluck S."/>
            <person name="Schmutz J."/>
            <person name="Larimer F."/>
            <person name="Land M."/>
            <person name="Hauser L."/>
            <person name="Kyrpides N."/>
            <person name="Ovchinnikova G."/>
            <person name="Zhao F."/>
            <person name="Li T."/>
            <person name="Liu Z."/>
            <person name="Overmann J."/>
            <person name="Bryant D.A."/>
            <person name="Richardson P."/>
        </authorList>
    </citation>
    <scope>NUCLEOTIDE SEQUENCE [LARGE SCALE GENOMIC DNA]</scope>
    <source>
        <strain>DSM 245 / NBRC 103803 / 6330</strain>
    </source>
</reference>
<evidence type="ECO:0000255" key="1">
    <source>
        <dbReference type="HAMAP-Rule" id="MF_00434"/>
    </source>
</evidence>
<feature type="chain" id="PRO_1000192915" description="Putative pterin-4-alpha-carbinolamine dehydratase">
    <location>
        <begin position="1"/>
        <end position="113"/>
    </location>
</feature>
<proteinExistence type="inferred from homology"/>
<keyword id="KW-0456">Lyase</keyword>
<protein>
    <recommendedName>
        <fullName evidence="1">Putative pterin-4-alpha-carbinolamine dehydratase</fullName>
        <shortName evidence="1">PHS</shortName>
        <ecNumber evidence="1">4.2.1.96</ecNumber>
    </recommendedName>
    <alternativeName>
        <fullName evidence="1">4-alpha-hydroxy-tetrahydropterin dehydratase</fullName>
    </alternativeName>
    <alternativeName>
        <fullName evidence="1">Pterin carbinolamine dehydratase</fullName>
        <shortName evidence="1">PCD</shortName>
    </alternativeName>
</protein>
<gene>
    <name type="ordered locus">Clim_1125</name>
</gene>
<dbReference type="EC" id="4.2.1.96" evidence="1"/>
<dbReference type="EMBL" id="CP001097">
    <property type="protein sequence ID" value="ACD90194.1"/>
    <property type="molecule type" value="Genomic_DNA"/>
</dbReference>
<dbReference type="RefSeq" id="WP_012466071.1">
    <property type="nucleotide sequence ID" value="NC_010803.1"/>
</dbReference>
<dbReference type="SMR" id="B3ECB9"/>
<dbReference type="STRING" id="290315.Clim_1125"/>
<dbReference type="KEGG" id="cli:Clim_1125"/>
<dbReference type="eggNOG" id="COG2154">
    <property type="taxonomic scope" value="Bacteria"/>
</dbReference>
<dbReference type="HOGENOM" id="CLU_081974_2_2_10"/>
<dbReference type="OrthoDB" id="9800108at2"/>
<dbReference type="Proteomes" id="UP000008841">
    <property type="component" value="Chromosome"/>
</dbReference>
<dbReference type="GO" id="GO:0008124">
    <property type="term" value="F:4-alpha-hydroxytetrahydrobiopterin dehydratase activity"/>
    <property type="evidence" value="ECO:0007669"/>
    <property type="project" value="UniProtKB-UniRule"/>
</dbReference>
<dbReference type="GO" id="GO:0006729">
    <property type="term" value="P:tetrahydrobiopterin biosynthetic process"/>
    <property type="evidence" value="ECO:0007669"/>
    <property type="project" value="InterPro"/>
</dbReference>
<dbReference type="CDD" id="cd00913">
    <property type="entry name" value="PCD_DCoH_subfamily_a"/>
    <property type="match status" value="1"/>
</dbReference>
<dbReference type="Gene3D" id="3.30.1360.20">
    <property type="entry name" value="Transcriptional coactivator/pterin dehydratase"/>
    <property type="match status" value="1"/>
</dbReference>
<dbReference type="HAMAP" id="MF_00434">
    <property type="entry name" value="Pterin_4_alpha"/>
    <property type="match status" value="1"/>
</dbReference>
<dbReference type="InterPro" id="IPR036428">
    <property type="entry name" value="PCD_sf"/>
</dbReference>
<dbReference type="InterPro" id="IPR050376">
    <property type="entry name" value="Pterin-4-alpha-carb_dehyd"/>
</dbReference>
<dbReference type="InterPro" id="IPR001533">
    <property type="entry name" value="Pterin_deHydtase"/>
</dbReference>
<dbReference type="NCBIfam" id="NF002016">
    <property type="entry name" value="PRK00823.1-1"/>
    <property type="match status" value="1"/>
</dbReference>
<dbReference type="PANTHER" id="PTHR42805">
    <property type="entry name" value="PTERIN-4-ALPHA-CARBINOLAMINE DEHYDRATASE-RELATED"/>
    <property type="match status" value="1"/>
</dbReference>
<dbReference type="PANTHER" id="PTHR42805:SF1">
    <property type="entry name" value="PTERIN-4-ALPHA-CARBINOLAMINE DEHYDRATASE-RELATED"/>
    <property type="match status" value="1"/>
</dbReference>
<dbReference type="Pfam" id="PF01329">
    <property type="entry name" value="Pterin_4a"/>
    <property type="match status" value="1"/>
</dbReference>
<dbReference type="SUPFAM" id="SSF55248">
    <property type="entry name" value="PCD-like"/>
    <property type="match status" value="1"/>
</dbReference>
<comment type="catalytic activity">
    <reaction evidence="1">
        <text>(4aS,6R)-4a-hydroxy-L-erythro-5,6,7,8-tetrahydrobiopterin = (6R)-L-erythro-6,7-dihydrobiopterin + H2O</text>
        <dbReference type="Rhea" id="RHEA:11920"/>
        <dbReference type="ChEBI" id="CHEBI:15377"/>
        <dbReference type="ChEBI" id="CHEBI:15642"/>
        <dbReference type="ChEBI" id="CHEBI:43120"/>
        <dbReference type="EC" id="4.2.1.96"/>
    </reaction>
</comment>
<comment type="similarity">
    <text evidence="1">Belongs to the pterin-4-alpha-carbinolamine dehydratase family.</text>
</comment>